<protein>
    <recommendedName>
        <fullName evidence="1">PF03932 family protein CutC</fullName>
    </recommendedName>
</protein>
<proteinExistence type="inferred from homology"/>
<accession>A5F8U2</accession>
<accession>C3LY40</accession>
<gene>
    <name evidence="1" type="primary">cutC</name>
    <name type="ordered locus">VC0395_A0263</name>
    <name type="ordered locus">VC395_0747</name>
</gene>
<comment type="subcellular location">
    <subcellularLocation>
        <location evidence="1">Cytoplasm</location>
    </subcellularLocation>
</comment>
<comment type="similarity">
    <text evidence="1">Belongs to the CutC family.</text>
</comment>
<comment type="caution">
    <text evidence="1">Once thought to be involved in copper homeostasis, experiments in E.coli have shown this is not the case.</text>
</comment>
<dbReference type="EMBL" id="CP000627">
    <property type="protein sequence ID" value="ABQ20392.1"/>
    <property type="molecule type" value="Genomic_DNA"/>
</dbReference>
<dbReference type="EMBL" id="CP001235">
    <property type="protein sequence ID" value="ACP08764.1"/>
    <property type="molecule type" value="Genomic_DNA"/>
</dbReference>
<dbReference type="RefSeq" id="WP_000877206.1">
    <property type="nucleotide sequence ID" value="NZ_JAACZH010000017.1"/>
</dbReference>
<dbReference type="SMR" id="A5F8U2"/>
<dbReference type="KEGG" id="vco:VC0395_A0263"/>
<dbReference type="KEGG" id="vcr:VC395_0747"/>
<dbReference type="PATRIC" id="fig|345073.21.peg.725"/>
<dbReference type="eggNOG" id="COG3142">
    <property type="taxonomic scope" value="Bacteria"/>
</dbReference>
<dbReference type="HOGENOM" id="CLU_050555_3_1_6"/>
<dbReference type="OrthoDB" id="9815677at2"/>
<dbReference type="Proteomes" id="UP000000249">
    <property type="component" value="Chromosome 2"/>
</dbReference>
<dbReference type="GO" id="GO:0005737">
    <property type="term" value="C:cytoplasm"/>
    <property type="evidence" value="ECO:0007669"/>
    <property type="project" value="UniProtKB-SubCell"/>
</dbReference>
<dbReference type="GO" id="GO:0005507">
    <property type="term" value="F:copper ion binding"/>
    <property type="evidence" value="ECO:0007669"/>
    <property type="project" value="TreeGrafter"/>
</dbReference>
<dbReference type="FunFam" id="3.20.20.380:FF:000001">
    <property type="entry name" value="Copper homeostasis protein CutC"/>
    <property type="match status" value="1"/>
</dbReference>
<dbReference type="Gene3D" id="3.20.20.380">
    <property type="entry name" value="Copper homeostasis (CutC) domain"/>
    <property type="match status" value="1"/>
</dbReference>
<dbReference type="HAMAP" id="MF_00795">
    <property type="entry name" value="CutC"/>
    <property type="match status" value="1"/>
</dbReference>
<dbReference type="InterPro" id="IPR005627">
    <property type="entry name" value="CutC-like"/>
</dbReference>
<dbReference type="InterPro" id="IPR036822">
    <property type="entry name" value="CutC-like_dom_sf"/>
</dbReference>
<dbReference type="PANTHER" id="PTHR12598">
    <property type="entry name" value="COPPER HOMEOSTASIS PROTEIN CUTC"/>
    <property type="match status" value="1"/>
</dbReference>
<dbReference type="PANTHER" id="PTHR12598:SF0">
    <property type="entry name" value="COPPER HOMEOSTASIS PROTEIN CUTC HOMOLOG"/>
    <property type="match status" value="1"/>
</dbReference>
<dbReference type="Pfam" id="PF03932">
    <property type="entry name" value="CutC"/>
    <property type="match status" value="1"/>
</dbReference>
<dbReference type="SUPFAM" id="SSF110395">
    <property type="entry name" value="CutC-like"/>
    <property type="match status" value="1"/>
</dbReference>
<keyword id="KW-0963">Cytoplasm</keyword>
<reference key="1">
    <citation type="submission" date="2007-03" db="EMBL/GenBank/DDBJ databases">
        <authorList>
            <person name="Heidelberg J."/>
        </authorList>
    </citation>
    <scope>NUCLEOTIDE SEQUENCE [LARGE SCALE GENOMIC DNA]</scope>
    <source>
        <strain>ATCC 39541 / Classical Ogawa 395 / O395</strain>
    </source>
</reference>
<reference key="2">
    <citation type="journal article" date="2008" name="PLoS ONE">
        <title>A recalibrated molecular clock and independent origins for the cholera pandemic clones.</title>
        <authorList>
            <person name="Feng L."/>
            <person name="Reeves P.R."/>
            <person name="Lan R."/>
            <person name="Ren Y."/>
            <person name="Gao C."/>
            <person name="Zhou Z."/>
            <person name="Ren Y."/>
            <person name="Cheng J."/>
            <person name="Wang W."/>
            <person name="Wang J."/>
            <person name="Qian W."/>
            <person name="Li D."/>
            <person name="Wang L."/>
        </authorList>
    </citation>
    <scope>NUCLEOTIDE SEQUENCE [LARGE SCALE GENOMIC DNA]</scope>
    <source>
        <strain>ATCC 39541 / Classical Ogawa 395 / O395</strain>
    </source>
</reference>
<feature type="chain" id="PRO_1000072841" description="PF03932 family protein CutC">
    <location>
        <begin position="1"/>
        <end position="254"/>
    </location>
</feature>
<sequence>MKYQVEVCIDNIESLHNAIAGGATRIELCSSLALGGLTPSAGLMYSAGRVSPIPAYAMIRPREGDFFYHDDELSIMAQDIRTAHQANLQGVVLGLLNADGTIDVKRSKPLIELAHSLGLGVTFHRAFDHCVNPEHALEEIIALGCERILTSGLARNAYLGIERLAQLVKQSAGRISIMAGAGINAQNVAEIALATGVNELHLSAKTTRPSEMLFIRSESKMGAADCDDFIIPVTSRDALQQTVHALAALNSVLH</sequence>
<name>CUTC_VIBC3</name>
<organism>
    <name type="scientific">Vibrio cholerae serotype O1 (strain ATCC 39541 / Classical Ogawa 395 / O395)</name>
    <dbReference type="NCBI Taxonomy" id="345073"/>
    <lineage>
        <taxon>Bacteria</taxon>
        <taxon>Pseudomonadati</taxon>
        <taxon>Pseudomonadota</taxon>
        <taxon>Gammaproteobacteria</taxon>
        <taxon>Vibrionales</taxon>
        <taxon>Vibrionaceae</taxon>
        <taxon>Vibrio</taxon>
    </lineage>
</organism>
<evidence type="ECO:0000255" key="1">
    <source>
        <dbReference type="HAMAP-Rule" id="MF_00795"/>
    </source>
</evidence>